<dbReference type="EMBL" id="CP000783">
    <property type="protein sequence ID" value="ABU75628.1"/>
    <property type="molecule type" value="Genomic_DNA"/>
</dbReference>
<dbReference type="RefSeq" id="WP_004388230.1">
    <property type="nucleotide sequence ID" value="NC_009778.1"/>
</dbReference>
<dbReference type="SMR" id="A7MLY0"/>
<dbReference type="KEGG" id="esa:ESA_00329"/>
<dbReference type="HOGENOM" id="CLU_170994_0_0_6"/>
<dbReference type="Proteomes" id="UP000000260">
    <property type="component" value="Chromosome"/>
</dbReference>
<dbReference type="GO" id="GO:0005829">
    <property type="term" value="C:cytosol"/>
    <property type="evidence" value="ECO:0007669"/>
    <property type="project" value="TreeGrafter"/>
</dbReference>
<dbReference type="GO" id="GO:0005506">
    <property type="term" value="F:iron ion binding"/>
    <property type="evidence" value="ECO:0007669"/>
    <property type="project" value="UniProtKB-UniRule"/>
</dbReference>
<dbReference type="GO" id="GO:0034599">
    <property type="term" value="P:cellular response to oxidative stress"/>
    <property type="evidence" value="ECO:0007669"/>
    <property type="project" value="TreeGrafter"/>
</dbReference>
<dbReference type="FunFam" id="1.10.3880.10:FF:000001">
    <property type="entry name" value="Probable Fe(2+)-trafficking protein"/>
    <property type="match status" value="1"/>
</dbReference>
<dbReference type="Gene3D" id="1.10.3880.10">
    <property type="entry name" value="Fe(II) trafficking protein YggX"/>
    <property type="match status" value="1"/>
</dbReference>
<dbReference type="HAMAP" id="MF_00686">
    <property type="entry name" value="Fe_traffic_YggX"/>
    <property type="match status" value="1"/>
</dbReference>
<dbReference type="InterPro" id="IPR007457">
    <property type="entry name" value="Fe_traffick_prot_YggX"/>
</dbReference>
<dbReference type="InterPro" id="IPR036766">
    <property type="entry name" value="Fe_traffick_prot_YggX_sf"/>
</dbReference>
<dbReference type="NCBIfam" id="NF003817">
    <property type="entry name" value="PRK05408.1"/>
    <property type="match status" value="1"/>
</dbReference>
<dbReference type="PANTHER" id="PTHR36965">
    <property type="entry name" value="FE(2+)-TRAFFICKING PROTEIN-RELATED"/>
    <property type="match status" value="1"/>
</dbReference>
<dbReference type="PANTHER" id="PTHR36965:SF1">
    <property type="entry name" value="FE(2+)-TRAFFICKING PROTEIN-RELATED"/>
    <property type="match status" value="1"/>
</dbReference>
<dbReference type="Pfam" id="PF04362">
    <property type="entry name" value="Iron_traffic"/>
    <property type="match status" value="1"/>
</dbReference>
<dbReference type="PIRSF" id="PIRSF029827">
    <property type="entry name" value="Fe_traffic_YggX"/>
    <property type="match status" value="1"/>
</dbReference>
<dbReference type="SUPFAM" id="SSF111148">
    <property type="entry name" value="YggX-like"/>
    <property type="match status" value="1"/>
</dbReference>
<feature type="chain" id="PRO_1000045034" description="Probable Fe(2+)-trafficking protein">
    <location>
        <begin position="1"/>
        <end position="91"/>
    </location>
</feature>
<gene>
    <name type="ordered locus">ESA_00329</name>
</gene>
<evidence type="ECO:0000255" key="1">
    <source>
        <dbReference type="HAMAP-Rule" id="MF_00686"/>
    </source>
</evidence>
<proteinExistence type="inferred from homology"/>
<sequence>MSRTIFCTFLQRDAEGQDFQLYPGELGKRIYNEISKEAWAQWQKKQTMLINEKKLNMMNPEHRKLLEEEMVNFLFEGKEVHIEGYTPPEQQ</sequence>
<accession>A7MLY0</accession>
<protein>
    <recommendedName>
        <fullName evidence="1">Probable Fe(2+)-trafficking protein</fullName>
    </recommendedName>
</protein>
<reference key="1">
    <citation type="journal article" date="2010" name="PLoS ONE">
        <title>Genome sequence of Cronobacter sakazakii BAA-894 and comparative genomic hybridization analysis with other Cronobacter species.</title>
        <authorList>
            <person name="Kucerova E."/>
            <person name="Clifton S.W."/>
            <person name="Xia X.Q."/>
            <person name="Long F."/>
            <person name="Porwollik S."/>
            <person name="Fulton L."/>
            <person name="Fronick C."/>
            <person name="Minx P."/>
            <person name="Kyung K."/>
            <person name="Warren W."/>
            <person name="Fulton R."/>
            <person name="Feng D."/>
            <person name="Wollam A."/>
            <person name="Shah N."/>
            <person name="Bhonagiri V."/>
            <person name="Nash W.E."/>
            <person name="Hallsworth-Pepin K."/>
            <person name="Wilson R.K."/>
            <person name="McClelland M."/>
            <person name="Forsythe S.J."/>
        </authorList>
    </citation>
    <scope>NUCLEOTIDE SEQUENCE [LARGE SCALE GENOMIC DNA]</scope>
    <source>
        <strain>ATCC BAA-894</strain>
    </source>
</reference>
<organism>
    <name type="scientific">Cronobacter sakazakii (strain ATCC BAA-894)</name>
    <name type="common">Enterobacter sakazakii</name>
    <dbReference type="NCBI Taxonomy" id="290339"/>
    <lineage>
        <taxon>Bacteria</taxon>
        <taxon>Pseudomonadati</taxon>
        <taxon>Pseudomonadota</taxon>
        <taxon>Gammaproteobacteria</taxon>
        <taxon>Enterobacterales</taxon>
        <taxon>Enterobacteriaceae</taxon>
        <taxon>Cronobacter</taxon>
    </lineage>
</organism>
<keyword id="KW-0408">Iron</keyword>
<keyword id="KW-1185">Reference proteome</keyword>
<comment type="function">
    <text evidence="1">Could be a mediator in iron transactions between iron acquisition and iron-requiring processes, such as synthesis and/or repair of Fe-S clusters in biosynthetic enzymes.</text>
</comment>
<comment type="subunit">
    <text evidence="1">Monomer.</text>
</comment>
<comment type="similarity">
    <text evidence="1">Belongs to the Fe(2+)-trafficking protein family.</text>
</comment>
<name>FETP_CROS8</name>